<gene>
    <name evidence="1" type="primary">ftsQ</name>
    <name type="ordered locus">EIO_0378</name>
</gene>
<reference key="1">
    <citation type="journal article" date="2011" name="J. Bacteriol.">
        <title>Complete genome sequence of the bacterium Ketogulonicigenium vulgare Y25.</title>
        <authorList>
            <person name="Xiong X.H."/>
            <person name="Han S."/>
            <person name="Wang J.H."/>
            <person name="Jiang Z.H."/>
            <person name="Chen W."/>
            <person name="Jia N."/>
            <person name="Wei H.L."/>
            <person name="Cheng H."/>
            <person name="Yang Y.X."/>
            <person name="Zhu B."/>
            <person name="You S."/>
            <person name="He J.Y."/>
            <person name="Hou W."/>
            <person name="Chen M.X."/>
            <person name="Yu C.J."/>
            <person name="Jiao Y.H."/>
            <person name="Zhang W.C."/>
        </authorList>
    </citation>
    <scope>NUCLEOTIDE SEQUENCE [LARGE SCALE GENOMIC DNA]</scope>
    <source>
        <strain>Y25</strain>
    </source>
</reference>
<evidence type="ECO:0000255" key="1">
    <source>
        <dbReference type="HAMAP-Rule" id="MF_00911"/>
    </source>
</evidence>
<evidence type="ECO:0000255" key="2">
    <source>
        <dbReference type="PROSITE-ProRule" id="PRU01115"/>
    </source>
</evidence>
<comment type="function">
    <text evidence="1">Essential cell division protein.</text>
</comment>
<comment type="subcellular location">
    <subcellularLocation>
        <location evidence="1">Cell inner membrane</location>
        <topology evidence="1">Single-pass type II membrane protein</topology>
    </subcellularLocation>
    <text evidence="1">Localizes to the division septum.</text>
</comment>
<comment type="similarity">
    <text evidence="1">Belongs to the FtsQ/DivIB family. FtsQ subfamily.</text>
</comment>
<name>FTSQ_KETVY</name>
<protein>
    <recommendedName>
        <fullName evidence="1">Cell division protein FtsQ</fullName>
    </recommendedName>
</protein>
<keyword id="KW-0131">Cell cycle</keyword>
<keyword id="KW-0132">Cell division</keyword>
<keyword id="KW-0997">Cell inner membrane</keyword>
<keyword id="KW-1003">Cell membrane</keyword>
<keyword id="KW-0472">Membrane</keyword>
<keyword id="KW-0812">Transmembrane</keyword>
<keyword id="KW-1133">Transmembrane helix</keyword>
<sequence length="302" mass="33349">MRPVDKKPVDRKIERETRYLRRDPAPSRWSYRYQRLMLTPAFRAGVRLGTPVIIIALAVAVVFGRADSRDWIMGHYNAAIAAVTQRPEFMVGSFAITGASPDLALAIEGLVDIPFPISTFNLDLQDLRTNIAALSPVRNVNVQAGGGVLQIVIEERQPVAVWRHVDGLRLMDGEGIATGMILNRADRPELPLIAGDGAQAAIPEAMELFRIASPLGARVLALVRMGERRWDLVLDREQIVQLPAVDAVAALQRVIAQEEAQQLLSRDVAVVDMRNDARQTIRMTQRARDALRSMPGRSAGRG</sequence>
<proteinExistence type="inferred from homology"/>
<accession>E3EYX6</accession>
<dbReference type="EMBL" id="CP002224">
    <property type="protein sequence ID" value="ADO41551.1"/>
    <property type="molecule type" value="Genomic_DNA"/>
</dbReference>
<dbReference type="RefSeq" id="WP_013383202.1">
    <property type="nucleotide sequence ID" value="NC_014625.1"/>
</dbReference>
<dbReference type="SMR" id="E3EYX6"/>
<dbReference type="KEGG" id="kvu:EIO_0378"/>
<dbReference type="HOGENOM" id="CLU_061141_0_0_5"/>
<dbReference type="GO" id="GO:0032153">
    <property type="term" value="C:cell division site"/>
    <property type="evidence" value="ECO:0007669"/>
    <property type="project" value="UniProtKB-UniRule"/>
</dbReference>
<dbReference type="GO" id="GO:0005886">
    <property type="term" value="C:plasma membrane"/>
    <property type="evidence" value="ECO:0007669"/>
    <property type="project" value="UniProtKB-SubCell"/>
</dbReference>
<dbReference type="GO" id="GO:0090529">
    <property type="term" value="P:cell septum assembly"/>
    <property type="evidence" value="ECO:0007669"/>
    <property type="project" value="InterPro"/>
</dbReference>
<dbReference type="GO" id="GO:0043093">
    <property type="term" value="P:FtsZ-dependent cytokinesis"/>
    <property type="evidence" value="ECO:0007669"/>
    <property type="project" value="UniProtKB-UniRule"/>
</dbReference>
<dbReference type="Gene3D" id="3.40.50.11690">
    <property type="entry name" value="Cell division protein FtsQ/DivIB"/>
    <property type="match status" value="1"/>
</dbReference>
<dbReference type="HAMAP" id="MF_00911">
    <property type="entry name" value="FtsQ_subfam"/>
    <property type="match status" value="1"/>
</dbReference>
<dbReference type="InterPro" id="IPR005548">
    <property type="entry name" value="Cell_div_FtsQ/DivIB_C"/>
</dbReference>
<dbReference type="InterPro" id="IPR026579">
    <property type="entry name" value="FtsQ"/>
</dbReference>
<dbReference type="InterPro" id="IPR045335">
    <property type="entry name" value="FtsQ_C_sf"/>
</dbReference>
<dbReference type="InterPro" id="IPR034746">
    <property type="entry name" value="POTRA"/>
</dbReference>
<dbReference type="PANTHER" id="PTHR35851">
    <property type="entry name" value="CELL DIVISION PROTEIN FTSQ"/>
    <property type="match status" value="1"/>
</dbReference>
<dbReference type="PANTHER" id="PTHR35851:SF1">
    <property type="entry name" value="CELL DIVISION PROTEIN FTSQ"/>
    <property type="match status" value="1"/>
</dbReference>
<dbReference type="Pfam" id="PF03799">
    <property type="entry name" value="FtsQ_DivIB_C"/>
    <property type="match status" value="1"/>
</dbReference>
<dbReference type="PROSITE" id="PS51779">
    <property type="entry name" value="POTRA"/>
    <property type="match status" value="1"/>
</dbReference>
<organism>
    <name type="scientific">Ketogulonicigenium vulgare (strain Y25)</name>
    <dbReference type="NCBI Taxonomy" id="880591"/>
    <lineage>
        <taxon>Bacteria</taxon>
        <taxon>Pseudomonadati</taxon>
        <taxon>Pseudomonadota</taxon>
        <taxon>Alphaproteobacteria</taxon>
        <taxon>Rhodobacterales</taxon>
        <taxon>Roseobacteraceae</taxon>
        <taxon>Ketogulonicigenium</taxon>
    </lineage>
</organism>
<feature type="chain" id="PRO_0000414674" description="Cell division protein FtsQ">
    <location>
        <begin position="1"/>
        <end position="302"/>
    </location>
</feature>
<feature type="topological domain" description="Cytoplasmic" evidence="1">
    <location>
        <begin position="1"/>
        <end position="43"/>
    </location>
</feature>
<feature type="transmembrane region" description="Helical" evidence="1">
    <location>
        <begin position="44"/>
        <end position="64"/>
    </location>
</feature>
<feature type="topological domain" description="Periplasmic" evidence="1">
    <location>
        <begin position="65"/>
        <end position="302"/>
    </location>
</feature>
<feature type="domain" description="POTRA" evidence="2">
    <location>
        <begin position="89"/>
        <end position="156"/>
    </location>
</feature>